<comment type="function">
    <text evidence="1">Mediates both low-affinity uptake and efflux of sugar across the plasma membrane.</text>
</comment>
<comment type="subunit">
    <text evidence="1">Forms homooligomers and/or heterooligomers.</text>
</comment>
<comment type="subcellular location">
    <subcellularLocation>
        <location evidence="1">Cell membrane</location>
        <topology evidence="1">Multi-pass membrane protein</topology>
    </subcellularLocation>
</comment>
<comment type="induction">
    <text evidence="4">By the X.oryzae pv. oryzae (Xoo) transcription activator-like effector (TALe) protein AvrXa7.</text>
</comment>
<comment type="similarity">
    <text evidence="5">Belongs to the SWEET sugar transporter family.</text>
</comment>
<name>SWT14_ORYSI</name>
<accession>B8BKP4</accession>
<organism>
    <name type="scientific">Oryza sativa subsp. indica</name>
    <name type="common">Rice</name>
    <dbReference type="NCBI Taxonomy" id="39946"/>
    <lineage>
        <taxon>Eukaryota</taxon>
        <taxon>Viridiplantae</taxon>
        <taxon>Streptophyta</taxon>
        <taxon>Embryophyta</taxon>
        <taxon>Tracheophyta</taxon>
        <taxon>Spermatophyta</taxon>
        <taxon>Magnoliopsida</taxon>
        <taxon>Liliopsida</taxon>
        <taxon>Poales</taxon>
        <taxon>Poaceae</taxon>
        <taxon>BOP clade</taxon>
        <taxon>Oryzoideae</taxon>
        <taxon>Oryzeae</taxon>
        <taxon>Oryzinae</taxon>
        <taxon>Oryza</taxon>
        <taxon>Oryza sativa</taxon>
    </lineage>
</organism>
<sequence>MAGMSLQHPWAFAFGLLGNIISFMTYLAPLPTFYRIYKSKSTQGFQSVPYVVALFSAMLWIYYALLKSDECLLITINSAGCVIETIYIAVYLVYAPKKAKMFTAKLLLLVNVGVFGLILLLTLLLSAGDRRIVVLGWVCVGFSVSVFVAPLSIIRLVVRTKSVEFMPFSLSFSLTISAVVWFLYGLLIKDKYVALPNVLGFSFGVIQMGLYAMYRNSTPKAVLTKEVEAATATGDDDHSAAGVKEHVVNIAKLSAAVDVVKTREVHPVDVESPPAEAPPQEDDKAAAATAAAVAGAGEKKVAA</sequence>
<proteinExistence type="evidence at transcript level"/>
<dbReference type="EMBL" id="CM000136">
    <property type="protein sequence ID" value="EEC68230.1"/>
    <property type="molecule type" value="Genomic_DNA"/>
</dbReference>
<dbReference type="SMR" id="B8BKP4"/>
<dbReference type="EnsemblPlants" id="BGIOSGA033930-TA">
    <property type="protein sequence ID" value="BGIOSGA033930-PA"/>
    <property type="gene ID" value="BGIOSGA033930"/>
</dbReference>
<dbReference type="Gramene" id="BGIOSGA033930-TA">
    <property type="protein sequence ID" value="BGIOSGA033930-PA"/>
    <property type="gene ID" value="BGIOSGA033930"/>
</dbReference>
<dbReference type="HOGENOM" id="CLU_048643_4_0_1"/>
<dbReference type="OMA" id="NCYLLCW"/>
<dbReference type="Proteomes" id="UP000007015">
    <property type="component" value="Chromosome 11"/>
</dbReference>
<dbReference type="GO" id="GO:0005886">
    <property type="term" value="C:plasma membrane"/>
    <property type="evidence" value="ECO:0000250"/>
    <property type="project" value="UniProtKB"/>
</dbReference>
<dbReference type="GO" id="GO:0008515">
    <property type="term" value="F:sucrose transmembrane transporter activity"/>
    <property type="evidence" value="ECO:0007669"/>
    <property type="project" value="EnsemblPlants"/>
</dbReference>
<dbReference type="GO" id="GO:0051119">
    <property type="term" value="F:sugar transmembrane transporter activity"/>
    <property type="evidence" value="ECO:0000250"/>
    <property type="project" value="UniProtKB"/>
</dbReference>
<dbReference type="FunFam" id="1.20.1280.290:FF:000001">
    <property type="entry name" value="Bidirectional sugar transporter SWEET"/>
    <property type="match status" value="1"/>
</dbReference>
<dbReference type="FunFam" id="1.20.1280.290:FF:000003">
    <property type="entry name" value="Bidirectional sugar transporter SWEET"/>
    <property type="match status" value="1"/>
</dbReference>
<dbReference type="Gene3D" id="1.20.1280.290">
    <property type="match status" value="2"/>
</dbReference>
<dbReference type="InterPro" id="IPR047664">
    <property type="entry name" value="SWEET"/>
</dbReference>
<dbReference type="InterPro" id="IPR004316">
    <property type="entry name" value="SWEET_rpt"/>
</dbReference>
<dbReference type="PANTHER" id="PTHR10791:SF223">
    <property type="entry name" value="BIDIRECTIONAL SUGAR TRANSPORTER SWEET14"/>
    <property type="match status" value="1"/>
</dbReference>
<dbReference type="PANTHER" id="PTHR10791">
    <property type="entry name" value="RAG1-ACTIVATING PROTEIN 1"/>
    <property type="match status" value="1"/>
</dbReference>
<dbReference type="Pfam" id="PF03083">
    <property type="entry name" value="MtN3_slv"/>
    <property type="match status" value="2"/>
</dbReference>
<reference key="1">
    <citation type="journal article" date="2005" name="PLoS Biol.">
        <title>The genomes of Oryza sativa: a history of duplications.</title>
        <authorList>
            <person name="Yu J."/>
            <person name="Wang J."/>
            <person name="Lin W."/>
            <person name="Li S."/>
            <person name="Li H."/>
            <person name="Zhou J."/>
            <person name="Ni P."/>
            <person name="Dong W."/>
            <person name="Hu S."/>
            <person name="Zeng C."/>
            <person name="Zhang J."/>
            <person name="Zhang Y."/>
            <person name="Li R."/>
            <person name="Xu Z."/>
            <person name="Li S."/>
            <person name="Li X."/>
            <person name="Zheng H."/>
            <person name="Cong L."/>
            <person name="Lin L."/>
            <person name="Yin J."/>
            <person name="Geng J."/>
            <person name="Li G."/>
            <person name="Shi J."/>
            <person name="Liu J."/>
            <person name="Lv H."/>
            <person name="Li J."/>
            <person name="Wang J."/>
            <person name="Deng Y."/>
            <person name="Ran L."/>
            <person name="Shi X."/>
            <person name="Wang X."/>
            <person name="Wu Q."/>
            <person name="Li C."/>
            <person name="Ren X."/>
            <person name="Wang J."/>
            <person name="Wang X."/>
            <person name="Li D."/>
            <person name="Liu D."/>
            <person name="Zhang X."/>
            <person name="Ji Z."/>
            <person name="Zhao W."/>
            <person name="Sun Y."/>
            <person name="Zhang Z."/>
            <person name="Bao J."/>
            <person name="Han Y."/>
            <person name="Dong L."/>
            <person name="Ji J."/>
            <person name="Chen P."/>
            <person name="Wu S."/>
            <person name="Liu J."/>
            <person name="Xiao Y."/>
            <person name="Bu D."/>
            <person name="Tan J."/>
            <person name="Yang L."/>
            <person name="Ye C."/>
            <person name="Zhang J."/>
            <person name="Xu J."/>
            <person name="Zhou Y."/>
            <person name="Yu Y."/>
            <person name="Zhang B."/>
            <person name="Zhuang S."/>
            <person name="Wei H."/>
            <person name="Liu B."/>
            <person name="Lei M."/>
            <person name="Yu H."/>
            <person name="Li Y."/>
            <person name="Xu H."/>
            <person name="Wei S."/>
            <person name="He X."/>
            <person name="Fang L."/>
            <person name="Zhang Z."/>
            <person name="Zhang Y."/>
            <person name="Huang X."/>
            <person name="Su Z."/>
            <person name="Tong W."/>
            <person name="Li J."/>
            <person name="Tong Z."/>
            <person name="Li S."/>
            <person name="Ye J."/>
            <person name="Wang L."/>
            <person name="Fang L."/>
            <person name="Lei T."/>
            <person name="Chen C.-S."/>
            <person name="Chen H.-C."/>
            <person name="Xu Z."/>
            <person name="Li H."/>
            <person name="Huang H."/>
            <person name="Zhang F."/>
            <person name="Xu H."/>
            <person name="Li N."/>
            <person name="Zhao C."/>
            <person name="Li S."/>
            <person name="Dong L."/>
            <person name="Huang Y."/>
            <person name="Li L."/>
            <person name="Xi Y."/>
            <person name="Qi Q."/>
            <person name="Li W."/>
            <person name="Zhang B."/>
            <person name="Hu W."/>
            <person name="Zhang Y."/>
            <person name="Tian X."/>
            <person name="Jiao Y."/>
            <person name="Liang X."/>
            <person name="Jin J."/>
            <person name="Gao L."/>
            <person name="Zheng W."/>
            <person name="Hao B."/>
            <person name="Liu S.-M."/>
            <person name="Wang W."/>
            <person name="Yuan L."/>
            <person name="Cao M."/>
            <person name="McDermott J."/>
            <person name="Samudrala R."/>
            <person name="Wang J."/>
            <person name="Wong G.K.-S."/>
            <person name="Yang H."/>
        </authorList>
    </citation>
    <scope>NUCLEOTIDE SEQUENCE [LARGE SCALE GENOMIC DNA]</scope>
    <source>
        <strain>cv. 93-11</strain>
    </source>
</reference>
<reference key="2">
    <citation type="journal article" date="2010" name="New Phytol.">
        <title>Promoter elements of rice susceptibility genes are bound and activated by specific TAL effectors from the bacterial blight pathogen, Xanthomonas oryzae pv. oryzae.</title>
        <authorList>
            <person name="Roemer P."/>
            <person name="Recht S."/>
            <person name="Strauss T."/>
            <person name="Elsaesser J."/>
            <person name="Schornack S."/>
            <person name="Boch J."/>
            <person name="Wang S."/>
            <person name="Lahaye T."/>
        </authorList>
    </citation>
    <scope>INDUCTION BY AVRXA7</scope>
    <source>
        <strain>cv. IR24</strain>
        <strain>cv. IRBB13</strain>
    </source>
</reference>
<keyword id="KW-1003">Cell membrane</keyword>
<keyword id="KW-0472">Membrane</keyword>
<keyword id="KW-1185">Reference proteome</keyword>
<keyword id="KW-0677">Repeat</keyword>
<keyword id="KW-0762">Sugar transport</keyword>
<keyword id="KW-0812">Transmembrane</keyword>
<keyword id="KW-1133">Transmembrane helix</keyword>
<keyword id="KW-0813">Transport</keyword>
<protein>
    <recommendedName>
        <fullName>Bidirectional sugar transporter SWEET14</fullName>
        <shortName>OsSWEET14</shortName>
    </recommendedName>
</protein>
<gene>
    <name type="primary">SWEET14</name>
    <name type="synonym">Os11N3</name>
    <name type="ORF">OsI_36230</name>
</gene>
<feature type="chain" id="PRO_0000404149" description="Bidirectional sugar transporter SWEET14">
    <location>
        <begin position="1"/>
        <end position="303"/>
    </location>
</feature>
<feature type="topological domain" description="Extracellular" evidence="2">
    <location>
        <begin position="1"/>
        <end position="9"/>
    </location>
</feature>
<feature type="transmembrane region" description="Helical; Name=1" evidence="2">
    <location>
        <begin position="10"/>
        <end position="30"/>
    </location>
</feature>
<feature type="topological domain" description="Cytoplasmic" evidence="2">
    <location>
        <begin position="31"/>
        <end position="44"/>
    </location>
</feature>
<feature type="transmembrane region" description="Helical; Name=2" evidence="2">
    <location>
        <begin position="45"/>
        <end position="65"/>
    </location>
</feature>
<feature type="topological domain" description="Extracellular" evidence="2">
    <location>
        <begin position="66"/>
        <end position="72"/>
    </location>
</feature>
<feature type="transmembrane region" description="Helical; Name=3" evidence="2">
    <location>
        <begin position="73"/>
        <end position="93"/>
    </location>
</feature>
<feature type="topological domain" description="Cytoplasmic" evidence="2">
    <location>
        <begin position="94"/>
        <end position="105"/>
    </location>
</feature>
<feature type="transmembrane region" description="Helical; Name=4" evidence="2">
    <location>
        <begin position="106"/>
        <end position="126"/>
    </location>
</feature>
<feature type="topological domain" description="Extracellular" evidence="2">
    <location>
        <begin position="127"/>
        <end position="133"/>
    </location>
</feature>
<feature type="transmembrane region" description="Helical; Name=5" evidence="2">
    <location>
        <begin position="134"/>
        <end position="154"/>
    </location>
</feature>
<feature type="topological domain" description="Cytoplasmic" evidence="2">
    <location>
        <begin position="155"/>
        <end position="167"/>
    </location>
</feature>
<feature type="transmembrane region" description="Helical; Name=6" evidence="2">
    <location>
        <begin position="168"/>
        <end position="188"/>
    </location>
</feature>
<feature type="topological domain" description="Extracellular" evidence="2">
    <location>
        <begin position="189"/>
        <end position="192"/>
    </location>
</feature>
<feature type="transmembrane region" description="Helical; Name=7" evidence="2">
    <location>
        <begin position="193"/>
        <end position="213"/>
    </location>
</feature>
<feature type="topological domain" description="Cytoplasmic" evidence="2">
    <location>
        <begin position="214"/>
        <end position="303"/>
    </location>
</feature>
<feature type="domain" description="MtN3/slv 1">
    <location>
        <begin position="13"/>
        <end position="98"/>
    </location>
</feature>
<feature type="domain" description="MtN3/slv 2">
    <location>
        <begin position="134"/>
        <end position="217"/>
    </location>
</feature>
<feature type="region of interest" description="Disordered" evidence="3">
    <location>
        <begin position="266"/>
        <end position="290"/>
    </location>
</feature>
<evidence type="ECO:0000250" key="1">
    <source>
        <dbReference type="UniProtKB" id="Q8L9J7"/>
    </source>
</evidence>
<evidence type="ECO:0000255" key="2"/>
<evidence type="ECO:0000256" key="3">
    <source>
        <dbReference type="SAM" id="MobiDB-lite"/>
    </source>
</evidence>
<evidence type="ECO:0000269" key="4">
    <source>
    </source>
</evidence>
<evidence type="ECO:0000305" key="5"/>